<accession>P13769</accession>
<sequence>MSEFSELVRILPLDQVAEIKRILSRGDPIPLQRLASLLTMVILTVNMSKKRKSSPIKLSTFTKYRRNVAKSLYYDMSSKTVFFEYHLKNTQDLQEGLEQAIAPYNFVVKVHKKPIDWQKQLSSVHERKAGHRSILSNNVGAEISKLAETKDSTWSFIERTMDLIEARTRQPTTRVAYRFLLQLTFMNCCRANDLKNADPSTFQIIADPHLGRILRAFVPETKTSIERFIYFFPCKGRCDPLLALDSYLLWVGPVPKTQTTDEETQYDYQLLQDTLLISYDRFIAKESKENIFKIPNGPKAHLGRHLMASYLGNNSLKSEATLYGNWSVERQEGVSKMADSRYMHTVKKSPPSYLFAFLSGYYKKSNQGEYVLAETLYNPLDYDKTLPITTNEKLICRRYGKNAKVIPKDALLYLYTYAQQKRKQLADPNEQNRLFSSESPAHPFLTPQSTGSSTPLTWTAPKTLSTGLMTPGEE</sequence>
<geneLocation type="plasmid">
    <name>pSB2</name>
</geneLocation>
<protein>
    <recommendedName>
        <fullName>Recombinase Flp protein</fullName>
    </recommendedName>
</protein>
<proteinExistence type="inferred from homology"/>
<dbReference type="EMBL" id="M18274">
    <property type="protein sequence ID" value="AAA35281.1"/>
    <property type="molecule type" value="Genomic_DNA"/>
</dbReference>
<dbReference type="PIR" id="A34024">
    <property type="entry name" value="A34024"/>
</dbReference>
<dbReference type="RefSeq" id="NP_040496.1">
    <property type="nucleotide sequence ID" value="NC_002055.1"/>
</dbReference>
<dbReference type="SMR" id="P13769"/>
<dbReference type="GO" id="GO:0003677">
    <property type="term" value="F:DNA binding"/>
    <property type="evidence" value="ECO:0007669"/>
    <property type="project" value="InterPro"/>
</dbReference>
<dbReference type="GO" id="GO:0015074">
    <property type="term" value="P:DNA integration"/>
    <property type="evidence" value="ECO:0007669"/>
    <property type="project" value="UniProtKB-KW"/>
</dbReference>
<dbReference type="GO" id="GO:0006310">
    <property type="term" value="P:DNA recombination"/>
    <property type="evidence" value="ECO:0007669"/>
    <property type="project" value="UniProtKB-KW"/>
</dbReference>
<dbReference type="Gene3D" id="1.10.443.10">
    <property type="entry name" value="Intergrase catalytic core"/>
    <property type="match status" value="1"/>
</dbReference>
<dbReference type="InterPro" id="IPR011010">
    <property type="entry name" value="DNA_brk_join_enz"/>
</dbReference>
<dbReference type="InterPro" id="IPR013762">
    <property type="entry name" value="Integrase-like_cat_sf"/>
</dbReference>
<dbReference type="InterPro" id="IPR005626">
    <property type="entry name" value="Recombinase_Flp_C"/>
</dbReference>
<dbReference type="InterPro" id="IPR022647">
    <property type="entry name" value="Recombinase_Flp_N"/>
</dbReference>
<dbReference type="Pfam" id="PF05202">
    <property type="entry name" value="Flp_C"/>
    <property type="match status" value="1"/>
</dbReference>
<dbReference type="Pfam" id="PF03930">
    <property type="entry name" value="Flp_N"/>
    <property type="match status" value="1"/>
</dbReference>
<dbReference type="SUPFAM" id="SSF56349">
    <property type="entry name" value="DNA breaking-rejoining enzymes"/>
    <property type="match status" value="1"/>
</dbReference>
<dbReference type="PROSITE" id="PS51899">
    <property type="entry name" value="TYR_RECOMBINASE_FLP"/>
    <property type="match status" value="1"/>
</dbReference>
<keyword id="KW-0229">DNA integration</keyword>
<keyword id="KW-0233">DNA recombination</keyword>
<keyword id="KW-0614">Plasmid</keyword>
<name>FLP_ZYGBA</name>
<comment type="function">
    <text>Catalyzes the recombination between the large inverted repetitions of the plasmid.</text>
</comment>
<comment type="similarity">
    <text evidence="3">Belongs to the 'phage' integrase family.</text>
</comment>
<evidence type="ECO:0000255" key="1">
    <source>
        <dbReference type="PROSITE-ProRule" id="PRU01247"/>
    </source>
</evidence>
<evidence type="ECO:0000256" key="2">
    <source>
        <dbReference type="SAM" id="MobiDB-lite"/>
    </source>
</evidence>
<evidence type="ECO:0000305" key="3"/>
<feature type="chain" id="PRO_0000197569" description="Recombinase Flp protein">
    <location>
        <begin position="1"/>
        <end position="474"/>
    </location>
</feature>
<feature type="domain" description="Tyr recombinase Flp-type" evidence="1">
    <location>
        <begin position="135"/>
        <end position="421"/>
    </location>
</feature>
<feature type="region of interest" description="Disordered" evidence="2">
    <location>
        <begin position="426"/>
        <end position="474"/>
    </location>
</feature>
<feature type="compositionally biased region" description="Polar residues" evidence="2">
    <location>
        <begin position="429"/>
        <end position="439"/>
    </location>
</feature>
<feature type="compositionally biased region" description="Polar residues" evidence="2">
    <location>
        <begin position="446"/>
        <end position="468"/>
    </location>
</feature>
<feature type="active site" description="O-(3'-phospho-DNA)-tyrosine intermediate" evidence="1">
    <location>
        <position position="342"/>
    </location>
</feature>
<organism>
    <name type="scientific">Zygosaccharomyces bailii</name>
    <dbReference type="NCBI Taxonomy" id="4954"/>
    <lineage>
        <taxon>Eukaryota</taxon>
        <taxon>Fungi</taxon>
        <taxon>Dikarya</taxon>
        <taxon>Ascomycota</taxon>
        <taxon>Saccharomycotina</taxon>
        <taxon>Saccharomycetes</taxon>
        <taxon>Saccharomycetales</taxon>
        <taxon>Saccharomycetaceae</taxon>
        <taxon>Zygosaccharomyces</taxon>
    </lineage>
</organism>
<reference key="1">
    <citation type="journal article" date="1987" name="J. Bacteriol.">
        <title>Yeast plasmids resembling 2 micron DNA: regional similarities and diversities at the molecular level.</title>
        <authorList>
            <person name="Utatsu I."/>
            <person name="Sakamoto S."/>
            <person name="Imura T."/>
            <person name="Toh-e A."/>
        </authorList>
    </citation>
    <scope>NUCLEOTIDE SEQUENCE [GENOMIC DNA]</scope>
    <source>
        <strain>ATCC 56075 / NBRC 1047 / NCTC 6969 / NCYC 128 / CBS 12809</strain>
    </source>
</reference>